<feature type="chain" id="PRO_0000093243" description="Putative ABC transporter ATP-binding protein MG303">
    <location>
        <begin position="1"/>
        <end position="357"/>
    </location>
</feature>
<feature type="domain" description="ABC transporter" evidence="1">
    <location>
        <begin position="72"/>
        <end position="312"/>
    </location>
</feature>
<feature type="binding site" evidence="1">
    <location>
        <begin position="107"/>
        <end position="114"/>
    </location>
    <ligand>
        <name>ATP</name>
        <dbReference type="ChEBI" id="CHEBI:30616"/>
    </ligand>
</feature>
<dbReference type="EMBL" id="L43967">
    <property type="protein sequence ID" value="AAC71525.1"/>
    <property type="molecule type" value="Genomic_DNA"/>
</dbReference>
<dbReference type="PIR" id="E64233">
    <property type="entry name" value="E64233"/>
</dbReference>
<dbReference type="RefSeq" id="WP_010869419.1">
    <property type="nucleotide sequence ID" value="NC_000908.2"/>
</dbReference>
<dbReference type="SMR" id="P47545"/>
<dbReference type="STRING" id="243273.MG_303"/>
<dbReference type="GeneID" id="88282466"/>
<dbReference type="KEGG" id="mge:MG_303"/>
<dbReference type="eggNOG" id="COG1122">
    <property type="taxonomic scope" value="Bacteria"/>
</dbReference>
<dbReference type="HOGENOM" id="CLU_000604_1_22_14"/>
<dbReference type="InParanoid" id="P47545"/>
<dbReference type="OrthoDB" id="9784332at2"/>
<dbReference type="BioCyc" id="MGEN243273:G1GJ2-372-MONOMER"/>
<dbReference type="Proteomes" id="UP000000807">
    <property type="component" value="Chromosome"/>
</dbReference>
<dbReference type="GO" id="GO:0043190">
    <property type="term" value="C:ATP-binding cassette (ABC) transporter complex"/>
    <property type="evidence" value="ECO:0000318"/>
    <property type="project" value="GO_Central"/>
</dbReference>
<dbReference type="GO" id="GO:0005524">
    <property type="term" value="F:ATP binding"/>
    <property type="evidence" value="ECO:0000318"/>
    <property type="project" value="GO_Central"/>
</dbReference>
<dbReference type="GO" id="GO:0016887">
    <property type="term" value="F:ATP hydrolysis activity"/>
    <property type="evidence" value="ECO:0007669"/>
    <property type="project" value="InterPro"/>
</dbReference>
<dbReference type="GO" id="GO:0042626">
    <property type="term" value="F:ATPase-coupled transmembrane transporter activity"/>
    <property type="evidence" value="ECO:0000318"/>
    <property type="project" value="GO_Central"/>
</dbReference>
<dbReference type="CDD" id="cd03225">
    <property type="entry name" value="ABC_cobalt_CbiO_domain1"/>
    <property type="match status" value="1"/>
</dbReference>
<dbReference type="Gene3D" id="3.40.50.300">
    <property type="entry name" value="P-loop containing nucleotide triphosphate hydrolases"/>
    <property type="match status" value="1"/>
</dbReference>
<dbReference type="InterPro" id="IPR003593">
    <property type="entry name" value="AAA+_ATPase"/>
</dbReference>
<dbReference type="InterPro" id="IPR003439">
    <property type="entry name" value="ABC_transporter-like_ATP-bd"/>
</dbReference>
<dbReference type="InterPro" id="IPR015856">
    <property type="entry name" value="ABC_transpr_CbiO/EcfA_su"/>
</dbReference>
<dbReference type="InterPro" id="IPR050095">
    <property type="entry name" value="ECF_ABC_transporter_ATP-bd"/>
</dbReference>
<dbReference type="InterPro" id="IPR027417">
    <property type="entry name" value="P-loop_NTPase"/>
</dbReference>
<dbReference type="PANTHER" id="PTHR43553:SF24">
    <property type="entry name" value="ENERGY-COUPLING FACTOR TRANSPORTER ATP-BINDING PROTEIN ECFA1"/>
    <property type="match status" value="1"/>
</dbReference>
<dbReference type="PANTHER" id="PTHR43553">
    <property type="entry name" value="HEAVY METAL TRANSPORTER"/>
    <property type="match status" value="1"/>
</dbReference>
<dbReference type="Pfam" id="PF00005">
    <property type="entry name" value="ABC_tran"/>
    <property type="match status" value="1"/>
</dbReference>
<dbReference type="SMART" id="SM00382">
    <property type="entry name" value="AAA"/>
    <property type="match status" value="1"/>
</dbReference>
<dbReference type="SUPFAM" id="SSF52540">
    <property type="entry name" value="P-loop containing nucleoside triphosphate hydrolases"/>
    <property type="match status" value="1"/>
</dbReference>
<dbReference type="PROSITE" id="PS50893">
    <property type="entry name" value="ABC_TRANSPORTER_2"/>
    <property type="match status" value="1"/>
</dbReference>
<sequence>MQTPQIKLDLIEQKYHLQAQKANLKLAKLDSKKLFSFYKKVDKIINPFYFLNSKKSIPFFNSKLLNIEQDPLFFNNISVFVNKHNDGQIIKCCSGVIEPNKITVIFGESGSGKTTLIKQLGLFEKPSFGYINCANYCYFANQYQQKITKNFKQKIGYILQKAEDQFFCDSILEEVLTGAVNLKLCHKKDVNYAKKYLDLCGLENIPLIKNPIELSDGQKKRLALASVLAMQVKFLILDEPTVGLDQMAISNLSKMLVAMKQTTRIVIVSHDVDFIFETADKIIHLHQGKIIHQTTVNDFFSNTSWLMQYGITPPVIIQAVKMFNEKGIAFKNQAEIKNLDDLISELKNLFSCKKPVF</sequence>
<proteinExistence type="inferred from homology"/>
<evidence type="ECO:0000255" key="1">
    <source>
        <dbReference type="PROSITE-ProRule" id="PRU00434"/>
    </source>
</evidence>
<evidence type="ECO:0000305" key="2"/>
<name>Y303_MYCGE</name>
<organism>
    <name type="scientific">Mycoplasma genitalium (strain ATCC 33530 / DSM 19775 / NCTC 10195 / G37)</name>
    <name type="common">Mycoplasmoides genitalium</name>
    <dbReference type="NCBI Taxonomy" id="243273"/>
    <lineage>
        <taxon>Bacteria</taxon>
        <taxon>Bacillati</taxon>
        <taxon>Mycoplasmatota</taxon>
        <taxon>Mycoplasmoidales</taxon>
        <taxon>Mycoplasmoidaceae</taxon>
        <taxon>Mycoplasmoides</taxon>
    </lineage>
</organism>
<accession>P47545</accession>
<comment type="similarity">
    <text evidence="2">Belongs to the ABC transporter superfamily.</text>
</comment>
<reference key="1">
    <citation type="journal article" date="1995" name="Science">
        <title>The minimal gene complement of Mycoplasma genitalium.</title>
        <authorList>
            <person name="Fraser C.M."/>
            <person name="Gocayne J.D."/>
            <person name="White O."/>
            <person name="Adams M.D."/>
            <person name="Clayton R.A."/>
            <person name="Fleischmann R.D."/>
            <person name="Bult C.J."/>
            <person name="Kerlavage A.R."/>
            <person name="Sutton G.G."/>
            <person name="Kelley J.M."/>
            <person name="Fritchman J.L."/>
            <person name="Weidman J.F."/>
            <person name="Small K.V."/>
            <person name="Sandusky M."/>
            <person name="Fuhrmann J.L."/>
            <person name="Nguyen D.T."/>
            <person name="Utterback T.R."/>
            <person name="Saudek D.M."/>
            <person name="Phillips C.A."/>
            <person name="Merrick J.M."/>
            <person name="Tomb J.-F."/>
            <person name="Dougherty B.A."/>
            <person name="Bott K.F."/>
            <person name="Hu P.-C."/>
            <person name="Lucier T.S."/>
            <person name="Peterson S.N."/>
            <person name="Smith H.O."/>
            <person name="Hutchison C.A. III"/>
            <person name="Venter J.C."/>
        </authorList>
    </citation>
    <scope>NUCLEOTIDE SEQUENCE [LARGE SCALE GENOMIC DNA]</scope>
    <source>
        <strain>ATCC 33530 / DSM 19775 / NCTC 10195 / G37</strain>
    </source>
</reference>
<gene>
    <name type="ordered locus">MG303</name>
</gene>
<protein>
    <recommendedName>
        <fullName>Putative ABC transporter ATP-binding protein MG303</fullName>
    </recommendedName>
</protein>
<keyword id="KW-0067">ATP-binding</keyword>
<keyword id="KW-0547">Nucleotide-binding</keyword>
<keyword id="KW-1185">Reference proteome</keyword>
<keyword id="KW-0813">Transport</keyword>